<comment type="function">
    <text>Antifreeze proteins lower the blood freezing point. This fish lives in antarctic waters where it experiences water temperatures near -1.9 degrees Celsius. Its blood has a freezing point of about -2.0 degrees Celsius, and 30% of the freezing-point depression is due mainly to the 3 major high molecular weight glycoproteins in the plasma.</text>
</comment>
<comment type="subcellular location">
    <subcellularLocation>
        <location>Secreted</location>
    </subcellularLocation>
</comment>
<comment type="PTM">
    <text>O-linked glycans consist of Gal-GalNAc disaccharides. The three proteins may differ only in the number of repeating units of -Ala-Ala-Thr-.</text>
</comment>
<comment type="miscellaneous">
    <text>The two small glycopeptides are present in a much higher concentration (5 times by weight) than the HMW glycoproteins but produce only a small depression effect. The exact physiological role of the small glycopeptides is not known.</text>
</comment>
<comment type="miscellaneous">
    <text>The three major glycoproteins (3, 4, and 5) have the same N-terminal sequence, A-A-T-A-A-T, and C-terminal Ala. Each protein is composed only of Ala and Thr residues in a ratio of 2:1 and arranged in the repeating sequence -A-A-T-.</text>
</comment>
<comment type="miscellaneous">
    <text>The small glycopeptides 7 and 8 appear to contain 20 and 14 residues, respectively, and to have the same N-terminal sequence and C-terminal residue as the 3 major proteins. However, each has 2 Pro residues (instead of 1 of the Ala in each of 2 repeating units).</text>
</comment>
<sequence length="31" mass="2522">AATAATAATAATAATAATAATAATAATAATA</sequence>
<proteinExistence type="evidence at protein level"/>
<accession>P02732</accession>
<organism>
    <name type="scientific">Pagothenia borchgrevinki</name>
    <name type="common">Bald rockcod</name>
    <name type="synonym">Trematomus borchgrevinki</name>
    <dbReference type="NCBI Taxonomy" id="8213"/>
    <lineage>
        <taxon>Eukaryota</taxon>
        <taxon>Metazoa</taxon>
        <taxon>Chordata</taxon>
        <taxon>Craniata</taxon>
        <taxon>Vertebrata</taxon>
        <taxon>Euteleostomi</taxon>
        <taxon>Actinopterygii</taxon>
        <taxon>Neopterygii</taxon>
        <taxon>Teleostei</taxon>
        <taxon>Neoteleostei</taxon>
        <taxon>Acanthomorphata</taxon>
        <taxon>Eupercaria</taxon>
        <taxon>Perciformes</taxon>
        <taxon>Notothenioidei</taxon>
        <taxon>Nototheniidae</taxon>
        <taxon>Pagothenia</taxon>
    </lineage>
</organism>
<evidence type="ECO:0000269" key="1">
    <source>
    </source>
</evidence>
<evidence type="ECO:0000305" key="2"/>
<reference key="1">
    <citation type="journal article" date="1971" name="J. Biol. Chem.">
        <title>Primary structure of freezing point-depressing glycoproteins.</title>
        <authorList>
            <person name="Devries A.L."/>
            <person name="Vandenheede J."/>
            <person name="Feeney R.E."/>
        </authorList>
    </citation>
    <scope>PROTEIN SEQUENCE</scope>
</reference>
<reference key="2">
    <citation type="journal article" date="1972" name="Biochem. Biophys. Res. Commun.">
        <title>Studies on the structure and activity of low molecular weight glycoproteins from an antarctic fish.</title>
        <authorList>
            <person name="Lin Y."/>
            <person name="Duman J.G."/>
            <person name="Devries A.L."/>
        </authorList>
    </citation>
    <scope>PROTEIN SEQUENCE</scope>
</reference>
<feature type="chain" id="PRO_0000155143" description="Ice-structuring glycoprotein 3">
    <location>
        <begin position="1"/>
        <end position="31"/>
    </location>
</feature>
<feature type="glycosylation site" description="O-linked (GalNAc...) threonine" evidence="1">
    <location>
        <position position="3"/>
    </location>
</feature>
<feature type="glycosylation site" description="O-linked (GalNAc...) threonine" evidence="1">
    <location>
        <position position="6"/>
    </location>
</feature>
<feature type="glycosylation site" description="O-linked (GalNAc...) threonine" evidence="1">
    <location>
        <position position="9"/>
    </location>
</feature>
<feature type="glycosylation site" description="O-linked (GalNAc...) threonine" evidence="1">
    <location>
        <position position="12"/>
    </location>
</feature>
<feature type="glycosylation site" description="O-linked (GalNAc...) threonine" evidence="1">
    <location>
        <position position="15"/>
    </location>
</feature>
<feature type="glycosylation site" description="O-linked (GalNAc...) threonine" evidence="1">
    <location>
        <position position="18"/>
    </location>
</feature>
<feature type="glycosylation site" description="O-linked (GalNAc...) threonine" evidence="1">
    <location>
        <position position="21"/>
    </location>
</feature>
<feature type="glycosylation site" description="O-linked (GalNAc...) threonine" evidence="1">
    <location>
        <position position="24"/>
    </location>
</feature>
<feature type="glycosylation site" description="O-linked (GalNAc...) threonine" evidence="1">
    <location>
        <position position="27"/>
    </location>
</feature>
<feature type="glycosylation site" description="O-linked (GalNAc...) threonine" evidence="1">
    <location>
        <position position="30"/>
    </location>
</feature>
<feature type="non-consecutive residues" evidence="2">
    <location>
        <begin position="30"/>
        <end position="31"/>
    </location>
</feature>
<dbReference type="PIR" id="A03191">
    <property type="entry name" value="A03191"/>
</dbReference>
<dbReference type="iPTMnet" id="P02732"/>
<dbReference type="GO" id="GO:0005576">
    <property type="term" value="C:extracellular region"/>
    <property type="evidence" value="ECO:0007669"/>
    <property type="project" value="UniProtKB-SubCell"/>
</dbReference>
<name>ANP3_PAGBO</name>
<keyword id="KW-0047">Antifreeze protein</keyword>
<keyword id="KW-0903">Direct protein sequencing</keyword>
<keyword id="KW-0325">Glycoprotein</keyword>
<keyword id="KW-0677">Repeat</keyword>
<keyword id="KW-0964">Secreted</keyword>
<protein>
    <recommendedName>
        <fullName>Ice-structuring glycoprotein 3</fullName>
        <shortName>ISGP 3</shortName>
    </recommendedName>
    <alternativeName>
        <fullName>Antifreeze glycoprotein 3</fullName>
    </alternativeName>
</protein>